<keyword id="KW-0012">Acyltransferase</keyword>
<keyword id="KW-0963">Cytoplasm</keyword>
<keyword id="KW-0275">Fatty acid biosynthesis</keyword>
<keyword id="KW-0276">Fatty acid metabolism</keyword>
<keyword id="KW-0444">Lipid biosynthesis</keyword>
<keyword id="KW-0443">Lipid metabolism</keyword>
<keyword id="KW-0511">Multifunctional enzyme</keyword>
<keyword id="KW-0808">Transferase</keyword>
<protein>
    <recommendedName>
        <fullName evidence="1">Beta-ketoacyl-[acyl-carrier-protein] synthase III</fullName>
        <shortName evidence="1">Beta-ketoacyl-ACP synthase III</shortName>
        <shortName evidence="1">KAS III</shortName>
        <ecNumber evidence="1">2.3.1.180</ecNumber>
    </recommendedName>
    <alternativeName>
        <fullName evidence="1">3-oxoacyl-[acyl-carrier-protein] synthase 3</fullName>
    </alternativeName>
    <alternativeName>
        <fullName evidence="1">3-oxoacyl-[acyl-carrier-protein] synthase III</fullName>
    </alternativeName>
</protein>
<comment type="function">
    <text evidence="1">Catalyzes the condensation reaction of fatty acid synthesis by the addition to an acyl acceptor of two carbons from malonyl-ACP. Catalyzes the first condensation reaction which initiates fatty acid synthesis and may therefore play a role in governing the total rate of fatty acid production. Possesses both acetoacetyl-ACP synthase and acetyl transacylase activities. Its substrate specificity determines the biosynthesis of branched-chain and/or straight-chain of fatty acids.</text>
</comment>
<comment type="catalytic activity">
    <reaction evidence="1">
        <text>malonyl-[ACP] + acetyl-CoA + H(+) = 3-oxobutanoyl-[ACP] + CO2 + CoA</text>
        <dbReference type="Rhea" id="RHEA:12080"/>
        <dbReference type="Rhea" id="RHEA-COMP:9623"/>
        <dbReference type="Rhea" id="RHEA-COMP:9625"/>
        <dbReference type="ChEBI" id="CHEBI:15378"/>
        <dbReference type="ChEBI" id="CHEBI:16526"/>
        <dbReference type="ChEBI" id="CHEBI:57287"/>
        <dbReference type="ChEBI" id="CHEBI:57288"/>
        <dbReference type="ChEBI" id="CHEBI:78449"/>
        <dbReference type="ChEBI" id="CHEBI:78450"/>
        <dbReference type="EC" id="2.3.1.180"/>
    </reaction>
</comment>
<comment type="pathway">
    <text evidence="1">Lipid metabolism; fatty acid biosynthesis.</text>
</comment>
<comment type="subunit">
    <text evidence="1">Homodimer.</text>
</comment>
<comment type="subcellular location">
    <subcellularLocation>
        <location evidence="1">Cytoplasm</location>
    </subcellularLocation>
</comment>
<comment type="domain">
    <text evidence="1">The last Arg residue of the ACP-binding site is essential for the weak association between ACP/AcpP and FabH.</text>
</comment>
<comment type="similarity">
    <text evidence="1">Belongs to the thiolase-like superfamily. FabH family.</text>
</comment>
<name>FABH_STRPZ</name>
<gene>
    <name evidence="1" type="primary">fabH</name>
    <name type="ordered locus">Spy49_1369c</name>
</gene>
<evidence type="ECO:0000255" key="1">
    <source>
        <dbReference type="HAMAP-Rule" id="MF_01815"/>
    </source>
</evidence>
<accession>B5XHY5</accession>
<sequence>MIFSKISQVAHYVPQQLVTNNDLASIMDTSHEWIFSRTGIAERHISRDEMTSDLAIQVADQLLTQSGLKADAIDFIIVATISPDATMPSTAAKVQAAIAATSAFAFDMTAACSGFVFALAMADKLIASGAYQNGMVIGAETLSKLVNWQDRATAVLFGDGAGGVLLEASKDKHVLAEPLHTDGARCQSLISGETSLSSPYSIGKKAIATIQMDGRAIFDFAIRDVSKSILTLMAQSDITKDDIDYCLLHQANRRILDKIARKIDVPREKFLENMMRYGNTSAASIPILLSEAVQKGQIRLDGTQKILLSGFGGGLTWGSLIVKI</sequence>
<reference key="1">
    <citation type="journal article" date="2008" name="J. Bacteriol.">
        <title>Genome sequence of a nephritogenic and highly transformable M49 strain of Streptococcus pyogenes.</title>
        <authorList>
            <person name="McShan W.M."/>
            <person name="Ferretti J.J."/>
            <person name="Karasawa T."/>
            <person name="Suvorov A.N."/>
            <person name="Lin S."/>
            <person name="Qin B."/>
            <person name="Jia H."/>
            <person name="Kenton S."/>
            <person name="Najar F."/>
            <person name="Wu H."/>
            <person name="Scott J."/>
            <person name="Roe B.A."/>
            <person name="Savic D.J."/>
        </authorList>
    </citation>
    <scope>NUCLEOTIDE SEQUENCE [LARGE SCALE GENOMIC DNA]</scope>
    <source>
        <strain>NZ131</strain>
    </source>
</reference>
<proteinExistence type="inferred from homology"/>
<feature type="chain" id="PRO_1000187902" description="Beta-ketoacyl-[acyl-carrier-protein] synthase III">
    <location>
        <begin position="1"/>
        <end position="324"/>
    </location>
</feature>
<feature type="region of interest" description="ACP-binding" evidence="1">
    <location>
        <begin position="250"/>
        <end position="254"/>
    </location>
</feature>
<feature type="active site" evidence="1">
    <location>
        <position position="112"/>
    </location>
</feature>
<feature type="active site" evidence="1">
    <location>
        <position position="249"/>
    </location>
</feature>
<feature type="active site" evidence="1">
    <location>
        <position position="279"/>
    </location>
</feature>
<organism>
    <name type="scientific">Streptococcus pyogenes serotype M49 (strain NZ131)</name>
    <dbReference type="NCBI Taxonomy" id="471876"/>
    <lineage>
        <taxon>Bacteria</taxon>
        <taxon>Bacillati</taxon>
        <taxon>Bacillota</taxon>
        <taxon>Bacilli</taxon>
        <taxon>Lactobacillales</taxon>
        <taxon>Streptococcaceae</taxon>
        <taxon>Streptococcus</taxon>
    </lineage>
</organism>
<dbReference type="EC" id="2.3.1.180" evidence="1"/>
<dbReference type="EMBL" id="CP000829">
    <property type="protein sequence ID" value="ACI61647.1"/>
    <property type="molecule type" value="Genomic_DNA"/>
</dbReference>
<dbReference type="SMR" id="B5XHY5"/>
<dbReference type="KEGG" id="soz:Spy49_1369c"/>
<dbReference type="HOGENOM" id="CLU_039592_4_1_9"/>
<dbReference type="UniPathway" id="UPA00094"/>
<dbReference type="Proteomes" id="UP000001039">
    <property type="component" value="Chromosome"/>
</dbReference>
<dbReference type="GO" id="GO:0005737">
    <property type="term" value="C:cytoplasm"/>
    <property type="evidence" value="ECO:0007669"/>
    <property type="project" value="UniProtKB-SubCell"/>
</dbReference>
<dbReference type="GO" id="GO:0004315">
    <property type="term" value="F:3-oxoacyl-[acyl-carrier-protein] synthase activity"/>
    <property type="evidence" value="ECO:0007669"/>
    <property type="project" value="InterPro"/>
</dbReference>
<dbReference type="GO" id="GO:0033818">
    <property type="term" value="F:beta-ketoacyl-acyl-carrier-protein synthase III activity"/>
    <property type="evidence" value="ECO:0007669"/>
    <property type="project" value="UniProtKB-UniRule"/>
</dbReference>
<dbReference type="GO" id="GO:0006633">
    <property type="term" value="P:fatty acid biosynthetic process"/>
    <property type="evidence" value="ECO:0007669"/>
    <property type="project" value="UniProtKB-UniRule"/>
</dbReference>
<dbReference type="CDD" id="cd00830">
    <property type="entry name" value="KAS_III"/>
    <property type="match status" value="1"/>
</dbReference>
<dbReference type="Gene3D" id="3.40.47.10">
    <property type="match status" value="1"/>
</dbReference>
<dbReference type="HAMAP" id="MF_01815">
    <property type="entry name" value="FabH"/>
    <property type="match status" value="1"/>
</dbReference>
<dbReference type="InterPro" id="IPR013747">
    <property type="entry name" value="ACP_syn_III_C"/>
</dbReference>
<dbReference type="InterPro" id="IPR013751">
    <property type="entry name" value="ACP_syn_III_N"/>
</dbReference>
<dbReference type="InterPro" id="IPR004655">
    <property type="entry name" value="FabH"/>
</dbReference>
<dbReference type="InterPro" id="IPR016039">
    <property type="entry name" value="Thiolase-like"/>
</dbReference>
<dbReference type="NCBIfam" id="TIGR00747">
    <property type="entry name" value="fabH"/>
    <property type="match status" value="1"/>
</dbReference>
<dbReference type="NCBIfam" id="NF006829">
    <property type="entry name" value="PRK09352.1"/>
    <property type="match status" value="1"/>
</dbReference>
<dbReference type="PANTHER" id="PTHR43091">
    <property type="entry name" value="3-OXOACYL-[ACYL-CARRIER-PROTEIN] SYNTHASE"/>
    <property type="match status" value="1"/>
</dbReference>
<dbReference type="PANTHER" id="PTHR43091:SF1">
    <property type="entry name" value="BETA-KETOACYL-[ACYL-CARRIER-PROTEIN] SYNTHASE III, CHLOROPLASTIC"/>
    <property type="match status" value="1"/>
</dbReference>
<dbReference type="Pfam" id="PF08545">
    <property type="entry name" value="ACP_syn_III"/>
    <property type="match status" value="1"/>
</dbReference>
<dbReference type="Pfam" id="PF08541">
    <property type="entry name" value="ACP_syn_III_C"/>
    <property type="match status" value="1"/>
</dbReference>
<dbReference type="SUPFAM" id="SSF53901">
    <property type="entry name" value="Thiolase-like"/>
    <property type="match status" value="1"/>
</dbReference>